<comment type="function">
    <text evidence="1">Catalyzes the conversion of 4-hydroxy-tetrahydrodipicolinate (HTPA) to tetrahydrodipicolinate.</text>
</comment>
<comment type="catalytic activity">
    <reaction evidence="1">
        <text>(S)-2,3,4,5-tetrahydrodipicolinate + NAD(+) + H2O = (2S,4S)-4-hydroxy-2,3,4,5-tetrahydrodipicolinate + NADH + H(+)</text>
        <dbReference type="Rhea" id="RHEA:35323"/>
        <dbReference type="ChEBI" id="CHEBI:15377"/>
        <dbReference type="ChEBI" id="CHEBI:15378"/>
        <dbReference type="ChEBI" id="CHEBI:16845"/>
        <dbReference type="ChEBI" id="CHEBI:57540"/>
        <dbReference type="ChEBI" id="CHEBI:57945"/>
        <dbReference type="ChEBI" id="CHEBI:67139"/>
        <dbReference type="EC" id="1.17.1.8"/>
    </reaction>
</comment>
<comment type="catalytic activity">
    <reaction evidence="1">
        <text>(S)-2,3,4,5-tetrahydrodipicolinate + NADP(+) + H2O = (2S,4S)-4-hydroxy-2,3,4,5-tetrahydrodipicolinate + NADPH + H(+)</text>
        <dbReference type="Rhea" id="RHEA:35331"/>
        <dbReference type="ChEBI" id="CHEBI:15377"/>
        <dbReference type="ChEBI" id="CHEBI:15378"/>
        <dbReference type="ChEBI" id="CHEBI:16845"/>
        <dbReference type="ChEBI" id="CHEBI:57783"/>
        <dbReference type="ChEBI" id="CHEBI:58349"/>
        <dbReference type="ChEBI" id="CHEBI:67139"/>
        <dbReference type="EC" id="1.17.1.8"/>
    </reaction>
</comment>
<comment type="pathway">
    <text evidence="1">Amino-acid biosynthesis; L-lysine biosynthesis via DAP pathway; (S)-tetrahydrodipicolinate from L-aspartate: step 4/4.</text>
</comment>
<comment type="subcellular location">
    <subcellularLocation>
        <location evidence="1">Cytoplasm</location>
    </subcellularLocation>
</comment>
<comment type="similarity">
    <text evidence="1">Belongs to the DapB family.</text>
</comment>
<comment type="caution">
    <text evidence="2">Was originally thought to be a dihydrodipicolinate reductase (DHDPR), catalyzing the conversion of dihydrodipicolinate to tetrahydrodipicolinate. However, it was shown in E.coli that the substrate of the enzymatic reaction is not dihydrodipicolinate (DHDP) but in fact (2S,4S)-4-hydroxy-2,3,4,5-tetrahydrodipicolinic acid (HTPA), the product released by the DapA-catalyzed reaction.</text>
</comment>
<proteinExistence type="inferred from homology"/>
<feature type="chain" id="PRO_1000093974" description="4-hydroxy-tetrahydrodipicolinate reductase">
    <location>
        <begin position="1"/>
        <end position="254"/>
    </location>
</feature>
<feature type="active site" description="Proton donor/acceptor" evidence="1">
    <location>
        <position position="147"/>
    </location>
</feature>
<feature type="active site" description="Proton donor" evidence="1">
    <location>
        <position position="151"/>
    </location>
</feature>
<feature type="binding site" evidence="1">
    <location>
        <begin position="7"/>
        <end position="12"/>
    </location>
    <ligand>
        <name>NAD(+)</name>
        <dbReference type="ChEBI" id="CHEBI:57540"/>
    </ligand>
</feature>
<feature type="binding site" evidence="1">
    <location>
        <position position="35"/>
    </location>
    <ligand>
        <name>NADP(+)</name>
        <dbReference type="ChEBI" id="CHEBI:58349"/>
    </ligand>
</feature>
<feature type="binding site" evidence="1">
    <location>
        <begin position="91"/>
        <end position="93"/>
    </location>
    <ligand>
        <name>NAD(+)</name>
        <dbReference type="ChEBI" id="CHEBI:57540"/>
    </ligand>
</feature>
<feature type="binding site" evidence="1">
    <location>
        <begin position="115"/>
        <end position="118"/>
    </location>
    <ligand>
        <name>NAD(+)</name>
        <dbReference type="ChEBI" id="CHEBI:57540"/>
    </ligand>
</feature>
<feature type="binding site" evidence="1">
    <location>
        <position position="148"/>
    </location>
    <ligand>
        <name>(S)-2,3,4,5-tetrahydrodipicolinate</name>
        <dbReference type="ChEBI" id="CHEBI:16845"/>
    </ligand>
</feature>
<feature type="binding site" evidence="1">
    <location>
        <begin position="157"/>
        <end position="158"/>
    </location>
    <ligand>
        <name>(S)-2,3,4,5-tetrahydrodipicolinate</name>
        <dbReference type="ChEBI" id="CHEBI:16845"/>
    </ligand>
</feature>
<gene>
    <name evidence="1" type="primary">dapB</name>
    <name type="ordered locus">HPP12_0516</name>
</gene>
<reference key="1">
    <citation type="submission" date="2008-10" db="EMBL/GenBank/DDBJ databases">
        <title>The complete genome sequence of Helicobacter pylori strain P12.</title>
        <authorList>
            <person name="Fischer W."/>
            <person name="Windhager L."/>
            <person name="Karnholz A."/>
            <person name="Zeiller M."/>
            <person name="Zimmer R."/>
            <person name="Haas R."/>
        </authorList>
    </citation>
    <scope>NUCLEOTIDE SEQUENCE [LARGE SCALE GENOMIC DNA]</scope>
    <source>
        <strain>P12</strain>
    </source>
</reference>
<organism>
    <name type="scientific">Helicobacter pylori (strain P12)</name>
    <dbReference type="NCBI Taxonomy" id="570508"/>
    <lineage>
        <taxon>Bacteria</taxon>
        <taxon>Pseudomonadati</taxon>
        <taxon>Campylobacterota</taxon>
        <taxon>Epsilonproteobacteria</taxon>
        <taxon>Campylobacterales</taxon>
        <taxon>Helicobacteraceae</taxon>
        <taxon>Helicobacter</taxon>
    </lineage>
</organism>
<accession>B6JL92</accession>
<sequence>MKIGVYGASGRIGKLLLEELKGGYKGLELSSVFVRQKCETDFSAFSHAPLVTNDLKAFVRACECVIDFSLPKGLDHLLEALLECPKILVSGTTGLEKETLEKMQQLALKAPLLHAHNMSIGIMMLNQLAFLASLKLKDADIEIVETHHNLKKDAPSGTALSLYETCAKARGYDEKNALTTHREGLRSKESIGIAAVRGGDVAGKHTIGFYLEGEYIELSHTATNRSIFAKGALEAALWLKDKTAKKYEINEMFG</sequence>
<name>DAPB_HELP2</name>
<evidence type="ECO:0000255" key="1">
    <source>
        <dbReference type="HAMAP-Rule" id="MF_00102"/>
    </source>
</evidence>
<evidence type="ECO:0000305" key="2"/>
<protein>
    <recommendedName>
        <fullName evidence="1">4-hydroxy-tetrahydrodipicolinate reductase</fullName>
        <shortName evidence="1">HTPA reductase</shortName>
        <ecNumber evidence="1">1.17.1.8</ecNumber>
    </recommendedName>
</protein>
<dbReference type="EC" id="1.17.1.8" evidence="1"/>
<dbReference type="EMBL" id="CP001217">
    <property type="protein sequence ID" value="ACJ07670.1"/>
    <property type="molecule type" value="Genomic_DNA"/>
</dbReference>
<dbReference type="SMR" id="B6JL92"/>
<dbReference type="KEGG" id="hpp:HPP12_0516"/>
<dbReference type="HOGENOM" id="CLU_047479_2_2_7"/>
<dbReference type="UniPathway" id="UPA00034">
    <property type="reaction ID" value="UER00018"/>
</dbReference>
<dbReference type="Proteomes" id="UP000008198">
    <property type="component" value="Chromosome"/>
</dbReference>
<dbReference type="GO" id="GO:0005829">
    <property type="term" value="C:cytosol"/>
    <property type="evidence" value="ECO:0007669"/>
    <property type="project" value="TreeGrafter"/>
</dbReference>
<dbReference type="GO" id="GO:0008839">
    <property type="term" value="F:4-hydroxy-tetrahydrodipicolinate reductase"/>
    <property type="evidence" value="ECO:0007669"/>
    <property type="project" value="UniProtKB-EC"/>
</dbReference>
<dbReference type="GO" id="GO:0051287">
    <property type="term" value="F:NAD binding"/>
    <property type="evidence" value="ECO:0007669"/>
    <property type="project" value="UniProtKB-UniRule"/>
</dbReference>
<dbReference type="GO" id="GO:0050661">
    <property type="term" value="F:NADP binding"/>
    <property type="evidence" value="ECO:0007669"/>
    <property type="project" value="UniProtKB-UniRule"/>
</dbReference>
<dbReference type="GO" id="GO:0016726">
    <property type="term" value="F:oxidoreductase activity, acting on CH or CH2 groups, NAD or NADP as acceptor"/>
    <property type="evidence" value="ECO:0007669"/>
    <property type="project" value="UniProtKB-UniRule"/>
</dbReference>
<dbReference type="GO" id="GO:0019877">
    <property type="term" value="P:diaminopimelate biosynthetic process"/>
    <property type="evidence" value="ECO:0007669"/>
    <property type="project" value="UniProtKB-UniRule"/>
</dbReference>
<dbReference type="GO" id="GO:0009089">
    <property type="term" value="P:lysine biosynthetic process via diaminopimelate"/>
    <property type="evidence" value="ECO:0007669"/>
    <property type="project" value="UniProtKB-UniRule"/>
</dbReference>
<dbReference type="CDD" id="cd02274">
    <property type="entry name" value="DHDPR_N"/>
    <property type="match status" value="1"/>
</dbReference>
<dbReference type="FunFam" id="3.30.360.10:FF:000004">
    <property type="entry name" value="4-hydroxy-tetrahydrodipicolinate reductase"/>
    <property type="match status" value="1"/>
</dbReference>
<dbReference type="Gene3D" id="3.30.360.10">
    <property type="entry name" value="Dihydrodipicolinate Reductase, domain 2"/>
    <property type="match status" value="1"/>
</dbReference>
<dbReference type="Gene3D" id="3.40.50.720">
    <property type="entry name" value="NAD(P)-binding Rossmann-like Domain"/>
    <property type="match status" value="1"/>
</dbReference>
<dbReference type="HAMAP" id="MF_00102">
    <property type="entry name" value="DapB"/>
    <property type="match status" value="1"/>
</dbReference>
<dbReference type="InterPro" id="IPR022663">
    <property type="entry name" value="DapB_C"/>
</dbReference>
<dbReference type="InterPro" id="IPR000846">
    <property type="entry name" value="DapB_N"/>
</dbReference>
<dbReference type="InterPro" id="IPR022664">
    <property type="entry name" value="DapB_N_CS"/>
</dbReference>
<dbReference type="InterPro" id="IPR023940">
    <property type="entry name" value="DHDPR_bac"/>
</dbReference>
<dbReference type="InterPro" id="IPR036291">
    <property type="entry name" value="NAD(P)-bd_dom_sf"/>
</dbReference>
<dbReference type="NCBIfam" id="TIGR00036">
    <property type="entry name" value="dapB"/>
    <property type="match status" value="1"/>
</dbReference>
<dbReference type="PANTHER" id="PTHR20836:SF0">
    <property type="entry name" value="4-HYDROXY-TETRAHYDRODIPICOLINATE REDUCTASE 1, CHLOROPLASTIC-RELATED"/>
    <property type="match status" value="1"/>
</dbReference>
<dbReference type="PANTHER" id="PTHR20836">
    <property type="entry name" value="DIHYDRODIPICOLINATE REDUCTASE"/>
    <property type="match status" value="1"/>
</dbReference>
<dbReference type="Pfam" id="PF05173">
    <property type="entry name" value="DapB_C"/>
    <property type="match status" value="1"/>
</dbReference>
<dbReference type="Pfam" id="PF01113">
    <property type="entry name" value="DapB_N"/>
    <property type="match status" value="1"/>
</dbReference>
<dbReference type="PIRSF" id="PIRSF000161">
    <property type="entry name" value="DHPR"/>
    <property type="match status" value="1"/>
</dbReference>
<dbReference type="SUPFAM" id="SSF55347">
    <property type="entry name" value="Glyceraldehyde-3-phosphate dehydrogenase-like, C-terminal domain"/>
    <property type="match status" value="1"/>
</dbReference>
<dbReference type="SUPFAM" id="SSF51735">
    <property type="entry name" value="NAD(P)-binding Rossmann-fold domains"/>
    <property type="match status" value="1"/>
</dbReference>
<dbReference type="PROSITE" id="PS01298">
    <property type="entry name" value="DAPB"/>
    <property type="match status" value="1"/>
</dbReference>
<keyword id="KW-0028">Amino-acid biosynthesis</keyword>
<keyword id="KW-0963">Cytoplasm</keyword>
<keyword id="KW-0220">Diaminopimelate biosynthesis</keyword>
<keyword id="KW-0457">Lysine biosynthesis</keyword>
<keyword id="KW-0520">NAD</keyword>
<keyword id="KW-0521">NADP</keyword>
<keyword id="KW-0560">Oxidoreductase</keyword>